<organism>
    <name type="scientific">Prochlorococcus marinus (strain MIT 9515)</name>
    <dbReference type="NCBI Taxonomy" id="167542"/>
    <lineage>
        <taxon>Bacteria</taxon>
        <taxon>Bacillati</taxon>
        <taxon>Cyanobacteriota</taxon>
        <taxon>Cyanophyceae</taxon>
        <taxon>Synechococcales</taxon>
        <taxon>Prochlorococcaceae</taxon>
        <taxon>Prochlorococcus</taxon>
    </lineage>
</organism>
<comment type="function">
    <text evidence="1">Catalyzes the attachment of glutamate to tRNA(Glu) in a two-step reaction: glutamate is first activated by ATP to form Glu-AMP and then transferred to the acceptor end of tRNA(Glu).</text>
</comment>
<comment type="catalytic activity">
    <reaction evidence="1">
        <text>tRNA(Glu) + L-glutamate + ATP = L-glutamyl-tRNA(Glu) + AMP + diphosphate</text>
        <dbReference type="Rhea" id="RHEA:23540"/>
        <dbReference type="Rhea" id="RHEA-COMP:9663"/>
        <dbReference type="Rhea" id="RHEA-COMP:9680"/>
        <dbReference type="ChEBI" id="CHEBI:29985"/>
        <dbReference type="ChEBI" id="CHEBI:30616"/>
        <dbReference type="ChEBI" id="CHEBI:33019"/>
        <dbReference type="ChEBI" id="CHEBI:78442"/>
        <dbReference type="ChEBI" id="CHEBI:78520"/>
        <dbReference type="ChEBI" id="CHEBI:456215"/>
        <dbReference type="EC" id="6.1.1.17"/>
    </reaction>
</comment>
<comment type="subunit">
    <text evidence="1">Monomer.</text>
</comment>
<comment type="subcellular location">
    <subcellularLocation>
        <location evidence="1">Cytoplasm</location>
    </subcellularLocation>
</comment>
<comment type="similarity">
    <text evidence="1">Belongs to the class-I aminoacyl-tRNA synthetase family. Glutamate--tRNA ligase type 1 subfamily.</text>
</comment>
<comment type="sequence caution" evidence="2">
    <conflict type="erroneous initiation">
        <sequence resource="EMBL-CDS" id="ABM71746"/>
    </conflict>
</comment>
<accession>A2BVD5</accession>
<dbReference type="EC" id="6.1.1.17" evidence="1"/>
<dbReference type="EMBL" id="CP000552">
    <property type="protein sequence ID" value="ABM71746.1"/>
    <property type="status" value="ALT_INIT"/>
    <property type="molecule type" value="Genomic_DNA"/>
</dbReference>
<dbReference type="RefSeq" id="WP_041710696.1">
    <property type="nucleotide sequence ID" value="NC_008817.1"/>
</dbReference>
<dbReference type="SMR" id="A2BVD5"/>
<dbReference type="STRING" id="167542.P9515_05371"/>
<dbReference type="GeneID" id="60201129"/>
<dbReference type="KEGG" id="pmc:P9515_05371"/>
<dbReference type="eggNOG" id="COG0008">
    <property type="taxonomic scope" value="Bacteria"/>
</dbReference>
<dbReference type="HOGENOM" id="CLU_015768_6_0_3"/>
<dbReference type="OrthoDB" id="9807503at2"/>
<dbReference type="Proteomes" id="UP000001589">
    <property type="component" value="Chromosome"/>
</dbReference>
<dbReference type="GO" id="GO:0005829">
    <property type="term" value="C:cytosol"/>
    <property type="evidence" value="ECO:0007669"/>
    <property type="project" value="TreeGrafter"/>
</dbReference>
<dbReference type="GO" id="GO:0005524">
    <property type="term" value="F:ATP binding"/>
    <property type="evidence" value="ECO:0007669"/>
    <property type="project" value="UniProtKB-UniRule"/>
</dbReference>
<dbReference type="GO" id="GO:0004818">
    <property type="term" value="F:glutamate-tRNA ligase activity"/>
    <property type="evidence" value="ECO:0007669"/>
    <property type="project" value="UniProtKB-UniRule"/>
</dbReference>
<dbReference type="GO" id="GO:0000049">
    <property type="term" value="F:tRNA binding"/>
    <property type="evidence" value="ECO:0007669"/>
    <property type="project" value="InterPro"/>
</dbReference>
<dbReference type="GO" id="GO:0008270">
    <property type="term" value="F:zinc ion binding"/>
    <property type="evidence" value="ECO:0007669"/>
    <property type="project" value="InterPro"/>
</dbReference>
<dbReference type="GO" id="GO:0006424">
    <property type="term" value="P:glutamyl-tRNA aminoacylation"/>
    <property type="evidence" value="ECO:0007669"/>
    <property type="project" value="UniProtKB-UniRule"/>
</dbReference>
<dbReference type="CDD" id="cd00808">
    <property type="entry name" value="GluRS_core"/>
    <property type="match status" value="1"/>
</dbReference>
<dbReference type="FunFam" id="3.40.50.620:FF:000007">
    <property type="entry name" value="Glutamate--tRNA ligase"/>
    <property type="match status" value="1"/>
</dbReference>
<dbReference type="Gene3D" id="1.10.10.350">
    <property type="match status" value="1"/>
</dbReference>
<dbReference type="Gene3D" id="1.10.8.70">
    <property type="entry name" value="Glutamate-tRNA synthetase, class I, anticodon-binding domain 1"/>
    <property type="match status" value="1"/>
</dbReference>
<dbReference type="Gene3D" id="1.10.1160.10">
    <property type="entry name" value="Glutamyl-trna Synthetase, Domain 2"/>
    <property type="match status" value="1"/>
</dbReference>
<dbReference type="Gene3D" id="3.90.800.10">
    <property type="entry name" value="Glutamyl-tRNA Synthetase, Domain 3"/>
    <property type="match status" value="1"/>
</dbReference>
<dbReference type="Gene3D" id="3.40.50.620">
    <property type="entry name" value="HUPs"/>
    <property type="match status" value="1"/>
</dbReference>
<dbReference type="HAMAP" id="MF_00022">
    <property type="entry name" value="Glu_tRNA_synth_type1"/>
    <property type="match status" value="1"/>
</dbReference>
<dbReference type="InterPro" id="IPR045462">
    <property type="entry name" value="aa-tRNA-synth_I_cd-bd"/>
</dbReference>
<dbReference type="InterPro" id="IPR020751">
    <property type="entry name" value="aa-tRNA-synth_I_codon-bd_sub2"/>
</dbReference>
<dbReference type="InterPro" id="IPR001412">
    <property type="entry name" value="aa-tRNA-synth_I_CS"/>
</dbReference>
<dbReference type="InterPro" id="IPR008925">
    <property type="entry name" value="aa_tRNA-synth_I_cd-bd_sf"/>
</dbReference>
<dbReference type="InterPro" id="IPR004527">
    <property type="entry name" value="Glu-tRNA-ligase_bac/mito"/>
</dbReference>
<dbReference type="InterPro" id="IPR020752">
    <property type="entry name" value="Glu-tRNA-synth_I_codon-bd_sub1"/>
</dbReference>
<dbReference type="InterPro" id="IPR000924">
    <property type="entry name" value="Glu/Gln-tRNA-synth"/>
</dbReference>
<dbReference type="InterPro" id="IPR020058">
    <property type="entry name" value="Glu/Gln-tRNA-synth_Ib_cat-dom"/>
</dbReference>
<dbReference type="InterPro" id="IPR020061">
    <property type="entry name" value="Glu_tRNA_lig_a-bdl"/>
</dbReference>
<dbReference type="InterPro" id="IPR049940">
    <property type="entry name" value="GluQ/Sye"/>
</dbReference>
<dbReference type="InterPro" id="IPR033910">
    <property type="entry name" value="GluRS_core"/>
</dbReference>
<dbReference type="InterPro" id="IPR014729">
    <property type="entry name" value="Rossmann-like_a/b/a_fold"/>
</dbReference>
<dbReference type="NCBIfam" id="TIGR00464">
    <property type="entry name" value="gltX_bact"/>
    <property type="match status" value="1"/>
</dbReference>
<dbReference type="PANTHER" id="PTHR43311">
    <property type="entry name" value="GLUTAMATE--TRNA LIGASE"/>
    <property type="match status" value="1"/>
</dbReference>
<dbReference type="PANTHER" id="PTHR43311:SF2">
    <property type="entry name" value="GLUTAMATE--TRNA LIGASE, MITOCHONDRIAL-RELATED"/>
    <property type="match status" value="1"/>
</dbReference>
<dbReference type="Pfam" id="PF19269">
    <property type="entry name" value="Anticodon_2"/>
    <property type="match status" value="1"/>
</dbReference>
<dbReference type="Pfam" id="PF00749">
    <property type="entry name" value="tRNA-synt_1c"/>
    <property type="match status" value="1"/>
</dbReference>
<dbReference type="PRINTS" id="PR00987">
    <property type="entry name" value="TRNASYNTHGLU"/>
</dbReference>
<dbReference type="SUPFAM" id="SSF48163">
    <property type="entry name" value="An anticodon-binding domain of class I aminoacyl-tRNA synthetases"/>
    <property type="match status" value="1"/>
</dbReference>
<dbReference type="SUPFAM" id="SSF52374">
    <property type="entry name" value="Nucleotidylyl transferase"/>
    <property type="match status" value="1"/>
</dbReference>
<dbReference type="PROSITE" id="PS00178">
    <property type="entry name" value="AA_TRNA_LIGASE_I"/>
    <property type="match status" value="1"/>
</dbReference>
<name>SYE_PROM5</name>
<proteinExistence type="inferred from homology"/>
<evidence type="ECO:0000255" key="1">
    <source>
        <dbReference type="HAMAP-Rule" id="MF_00022"/>
    </source>
</evidence>
<evidence type="ECO:0000305" key="2"/>
<protein>
    <recommendedName>
        <fullName evidence="1">Glutamate--tRNA ligase</fullName>
        <ecNumber evidence="1">6.1.1.17</ecNumber>
    </recommendedName>
    <alternativeName>
        <fullName evidence="1">Glutamyl-tRNA synthetase</fullName>
        <shortName evidence="1">GluRS</shortName>
    </alternativeName>
</protein>
<reference key="1">
    <citation type="journal article" date="2007" name="PLoS Genet.">
        <title>Patterns and implications of gene gain and loss in the evolution of Prochlorococcus.</title>
        <authorList>
            <person name="Kettler G.C."/>
            <person name="Martiny A.C."/>
            <person name="Huang K."/>
            <person name="Zucker J."/>
            <person name="Coleman M.L."/>
            <person name="Rodrigue S."/>
            <person name="Chen F."/>
            <person name="Lapidus A."/>
            <person name="Ferriera S."/>
            <person name="Johnson J."/>
            <person name="Steglich C."/>
            <person name="Church G.M."/>
            <person name="Richardson P."/>
            <person name="Chisholm S.W."/>
        </authorList>
    </citation>
    <scope>NUCLEOTIDE SEQUENCE [LARGE SCALE GENOMIC DNA]</scope>
    <source>
        <strain>MIT 9515</strain>
    </source>
</reference>
<feature type="chain" id="PRO_0000330989" description="Glutamate--tRNA ligase">
    <location>
        <begin position="1"/>
        <end position="478"/>
    </location>
</feature>
<feature type="short sequence motif" description="'HIGH' region" evidence="1">
    <location>
        <begin position="9"/>
        <end position="19"/>
    </location>
</feature>
<feature type="short sequence motif" description="'KMSKS' region" evidence="1">
    <location>
        <begin position="248"/>
        <end position="252"/>
    </location>
</feature>
<feature type="binding site" evidence="1">
    <location>
        <position position="251"/>
    </location>
    <ligand>
        <name>ATP</name>
        <dbReference type="ChEBI" id="CHEBI:30616"/>
    </ligand>
</feature>
<gene>
    <name evidence="1" type="primary">gltX</name>
    <name type="ordered locus">P9515_05371</name>
</gene>
<sequence>MEKRLRLAPSPTGLLHIGTARTALFNWLYAKKTNGKFFIRIEDTDIVRSKSEYTTNILDGLNWLGLSWDEEPIKQSKRISIYKKNIKKLLEIGAAYRCFTSESEISELREKQKSSGLPPRHDNRHRNLTSNEIKAFLSQGRSSVIRFKIDDETEIKWEDQIRGEIKWKGRDLGGDLVLSRRALGDEIGDPLYNLAVVVDDNFMNITHVVRGEDHISNTAKQILIYKALNFKLPIFSHTPLILNSEGKKLSKRDCVTSIDEFREMGYLPEALANYMAFLGWSIKDSESEILSLKEISRVFNLSDINKAGAKFNWEKLNWINSQYIKQMELTKLRQLIKNYWDDMGWESPSAEWDLKLINLIRDSMLLLKDAIDQSKPFFTLSQMQKEGEEFLNNKDETRESLKYILCYLKEENISTIDSNKAKEIIHKISVENSIKKGILMKSLRVAFFGCLSGPDLIQSWELFSENKSDITLIERCLI</sequence>
<keyword id="KW-0030">Aminoacyl-tRNA synthetase</keyword>
<keyword id="KW-0067">ATP-binding</keyword>
<keyword id="KW-0963">Cytoplasm</keyword>
<keyword id="KW-0436">Ligase</keyword>
<keyword id="KW-0547">Nucleotide-binding</keyword>
<keyword id="KW-0648">Protein biosynthesis</keyword>